<proteinExistence type="evidence at transcript level"/>
<keyword id="KW-0325">Glycoprotein</keyword>
<keyword id="KW-0524">Neurogenesis</keyword>
<keyword id="KW-1185">Reference proteome</keyword>
<keyword id="KW-0677">Repeat</keyword>
<keyword id="KW-0964">Secreted</keyword>
<keyword id="KW-0732">Signal</keyword>
<gene>
    <name type="primary">ndnf</name>
    <name type="ORF">TNeu083d09</name>
</gene>
<accession>A4IIK7</accession>
<accession>B1H2I6</accession>
<name>NDNF_XENTR</name>
<comment type="function">
    <text evidence="1 2">Secretory protein that plays a role in various cellular processes. Acts as a chemorepellent acting on gonadotropin-releasing hormone (GnRH) expressing neurons regulating their migration to the hypothalamus. Also promotes neuron migration, growth and survival as well as neurite outgrowth and is involved in the development of the olfactory system. May also act through the regulation of growth factors activity and downstream signaling (By similarity). Also regulates extracellular matrix assembly and cell adhesiveness (By similarity). Promotes endothelial cell survival, vessel formation and plays an important role in the process of revascularization through NOS3-dependent mechanisms (By similarity).</text>
</comment>
<comment type="subcellular location">
    <subcellularLocation>
        <location evidence="1">Secreted</location>
    </subcellularLocation>
</comment>
<comment type="sequence caution" evidence="4">
    <conflict type="miscellaneous discrepancy">
        <sequence resource="EMBL-CDS" id="AAI36061"/>
    </conflict>
    <text>Contaminating sequence. Potential poly-A sequence.</text>
</comment>
<reference key="1">
    <citation type="submission" date="2006-10" db="EMBL/GenBank/DDBJ databases">
        <authorList>
            <consortium name="Sanger Xenopus tropicalis EST/cDNA project"/>
        </authorList>
    </citation>
    <scope>NUCLEOTIDE SEQUENCE [LARGE SCALE MRNA]</scope>
    <source>
        <tissue>Neurula</tissue>
    </source>
</reference>
<reference key="2">
    <citation type="submission" date="2007-03" db="EMBL/GenBank/DDBJ databases">
        <authorList>
            <consortium name="NIH - Xenopus Gene Collection (XGC) project"/>
        </authorList>
    </citation>
    <scope>NUCLEOTIDE SEQUENCE [LARGE SCALE MRNA]</scope>
    <source>
        <tissue>Brain</tissue>
    </source>
</reference>
<organism>
    <name type="scientific">Xenopus tropicalis</name>
    <name type="common">Western clawed frog</name>
    <name type="synonym">Silurana tropicalis</name>
    <dbReference type="NCBI Taxonomy" id="8364"/>
    <lineage>
        <taxon>Eukaryota</taxon>
        <taxon>Metazoa</taxon>
        <taxon>Chordata</taxon>
        <taxon>Craniata</taxon>
        <taxon>Vertebrata</taxon>
        <taxon>Euteleostomi</taxon>
        <taxon>Amphibia</taxon>
        <taxon>Batrachia</taxon>
        <taxon>Anura</taxon>
        <taxon>Pipoidea</taxon>
        <taxon>Pipidae</taxon>
        <taxon>Xenopodinae</taxon>
        <taxon>Xenopus</taxon>
        <taxon>Silurana</taxon>
    </lineage>
</organism>
<dbReference type="EMBL" id="CR942677">
    <property type="status" value="NOT_ANNOTATED_CDS"/>
    <property type="molecule type" value="mRNA"/>
</dbReference>
<dbReference type="EMBL" id="BC136060">
    <property type="protein sequence ID" value="AAI36061.1"/>
    <property type="status" value="ALT_SEQ"/>
    <property type="molecule type" value="mRNA"/>
</dbReference>
<dbReference type="EMBL" id="BC161015">
    <property type="protein sequence ID" value="AAI61015.1"/>
    <property type="molecule type" value="mRNA"/>
</dbReference>
<dbReference type="RefSeq" id="NP_001116272.1">
    <property type="nucleotide sequence ID" value="NM_001122800.1"/>
</dbReference>
<dbReference type="RefSeq" id="XP_012821337.2">
    <property type="nucleotide sequence ID" value="XM_012965883.3"/>
</dbReference>
<dbReference type="RefSeq" id="XP_031758056.1">
    <property type="nucleotide sequence ID" value="XM_031902196.1"/>
</dbReference>
<dbReference type="FunCoup" id="A4IIK7">
    <property type="interactions" value="274"/>
</dbReference>
<dbReference type="GlyCosmos" id="A4IIK7">
    <property type="glycosylation" value="1 site, No reported glycans"/>
</dbReference>
<dbReference type="PaxDb" id="8364-ENSXETP00000004498"/>
<dbReference type="GeneID" id="100125014"/>
<dbReference type="KEGG" id="xtr:100125014"/>
<dbReference type="AGR" id="Xenbase:XB-GENE-1016849"/>
<dbReference type="CTD" id="79625"/>
<dbReference type="Xenbase" id="XB-GENE-1016849">
    <property type="gene designation" value="ndnf"/>
</dbReference>
<dbReference type="eggNOG" id="KOG4806">
    <property type="taxonomic scope" value="Eukaryota"/>
</dbReference>
<dbReference type="InParanoid" id="A4IIK7"/>
<dbReference type="OMA" id="YLFRDTS"/>
<dbReference type="OrthoDB" id="9872501at2759"/>
<dbReference type="Proteomes" id="UP000008143">
    <property type="component" value="Chromosome 1"/>
</dbReference>
<dbReference type="Bgee" id="ENSXETG00000002103">
    <property type="expression patterns" value="Expressed in brain and 10 other cell types or tissues"/>
</dbReference>
<dbReference type="GO" id="GO:0031012">
    <property type="term" value="C:extracellular matrix"/>
    <property type="evidence" value="ECO:0000250"/>
    <property type="project" value="UniProtKB"/>
</dbReference>
<dbReference type="GO" id="GO:0005576">
    <property type="term" value="C:extracellular region"/>
    <property type="evidence" value="ECO:0000250"/>
    <property type="project" value="UniProtKB"/>
</dbReference>
<dbReference type="GO" id="GO:0005539">
    <property type="term" value="F:glycosaminoglycan binding"/>
    <property type="evidence" value="ECO:0000250"/>
    <property type="project" value="UniProtKB"/>
</dbReference>
<dbReference type="GO" id="GO:0008201">
    <property type="term" value="F:heparin binding"/>
    <property type="evidence" value="ECO:0000250"/>
    <property type="project" value="UniProtKB"/>
</dbReference>
<dbReference type="GO" id="GO:0044344">
    <property type="term" value="P:cellular response to fibroblast growth factor stimulus"/>
    <property type="evidence" value="ECO:0000250"/>
    <property type="project" value="UniProtKB"/>
</dbReference>
<dbReference type="GO" id="GO:0030198">
    <property type="term" value="P:extracellular matrix organization"/>
    <property type="evidence" value="ECO:0000250"/>
    <property type="project" value="UniProtKB"/>
</dbReference>
<dbReference type="GO" id="GO:0021828">
    <property type="term" value="P:gonadotrophin-releasing hormone neuronal migration to the hypothalamus"/>
    <property type="evidence" value="ECO:0000250"/>
    <property type="project" value="UniProtKB"/>
</dbReference>
<dbReference type="GO" id="GO:0043524">
    <property type="term" value="P:negative regulation of neuron apoptotic process"/>
    <property type="evidence" value="ECO:0000250"/>
    <property type="project" value="UniProtKB"/>
</dbReference>
<dbReference type="GO" id="GO:0001764">
    <property type="term" value="P:neuron migration"/>
    <property type="evidence" value="ECO:0000250"/>
    <property type="project" value="UniProtKB"/>
</dbReference>
<dbReference type="GO" id="GO:0010811">
    <property type="term" value="P:positive regulation of cell-substrate adhesion"/>
    <property type="evidence" value="ECO:0000250"/>
    <property type="project" value="UniProtKB"/>
</dbReference>
<dbReference type="GO" id="GO:0010976">
    <property type="term" value="P:positive regulation of neuron projection development"/>
    <property type="evidence" value="ECO:0000250"/>
    <property type="project" value="UniProtKB"/>
</dbReference>
<dbReference type="CDD" id="cd00063">
    <property type="entry name" value="FN3"/>
    <property type="match status" value="1"/>
</dbReference>
<dbReference type="FunFam" id="2.60.40.10:FF:003194">
    <property type="entry name" value="Neuron-derived neurotrophic factor"/>
    <property type="match status" value="1"/>
</dbReference>
<dbReference type="Gene3D" id="2.60.40.10">
    <property type="entry name" value="Immunoglobulins"/>
    <property type="match status" value="1"/>
</dbReference>
<dbReference type="InterPro" id="IPR003961">
    <property type="entry name" value="FN3_dom"/>
</dbReference>
<dbReference type="InterPro" id="IPR036116">
    <property type="entry name" value="FN3_sf"/>
</dbReference>
<dbReference type="InterPro" id="IPR013783">
    <property type="entry name" value="Ig-like_fold"/>
</dbReference>
<dbReference type="InterPro" id="IPR019326">
    <property type="entry name" value="NDNF"/>
</dbReference>
<dbReference type="InterPro" id="IPR045805">
    <property type="entry name" value="NDNF_C"/>
</dbReference>
<dbReference type="InterPro" id="IPR055271">
    <property type="entry name" value="NDNF_Fn(III)_1"/>
</dbReference>
<dbReference type="InterPro" id="IPR056225">
    <property type="entry name" value="NDNF_N"/>
</dbReference>
<dbReference type="PANTHER" id="PTHR14619">
    <property type="entry name" value="NEURON-DERIVED NEUROTROPHIC FACTOR"/>
    <property type="match status" value="1"/>
</dbReference>
<dbReference type="PANTHER" id="PTHR14619:SF1">
    <property type="entry name" value="PROTEIN NDNF"/>
    <property type="match status" value="1"/>
</dbReference>
<dbReference type="Pfam" id="PF10179">
    <property type="entry name" value="NDNF"/>
    <property type="match status" value="1"/>
</dbReference>
<dbReference type="Pfam" id="PF19433">
    <property type="entry name" value="NDNF_C"/>
    <property type="match status" value="1"/>
</dbReference>
<dbReference type="Pfam" id="PF24354">
    <property type="entry name" value="NDNF_N"/>
    <property type="match status" value="1"/>
</dbReference>
<dbReference type="SMART" id="SM00060">
    <property type="entry name" value="FN3"/>
    <property type="match status" value="2"/>
</dbReference>
<dbReference type="SUPFAM" id="SSF49265">
    <property type="entry name" value="Fibronectin type III"/>
    <property type="match status" value="1"/>
</dbReference>
<evidence type="ECO:0000250" key="1">
    <source>
        <dbReference type="UniProtKB" id="Q8C119"/>
    </source>
</evidence>
<evidence type="ECO:0000250" key="2">
    <source>
        <dbReference type="UniProtKB" id="Q8TB73"/>
    </source>
</evidence>
<evidence type="ECO:0000255" key="3"/>
<evidence type="ECO:0000305" key="4"/>
<sequence length="570" mass="64752">MKLCPWYIALILLPVCLQSQKLPTRDEELFQMQIRDKALFHDSSVIPDGAEISGYLFRDNPKRYFFVVEEDNTPLSVIVTPCDAPLEWKLTLQELPEEASGEGSGEPEPLEEQKQQIVNEEGTELFSYKGNDVEYFVSSSSPSGLYQLELISTEKDTHFKVYATTTPESDQPYPELPYDPRVDVTSLGRTTVTLAWKPTPTSSVMKQPIQYCVVINKEHNFKSICAVEAKMNADDAFMMVPKPGIDFNPFDFAHFGFQSDNNAGKDRNFMPKASSSKLLRQITTKPKVDIQKVCIGNKNIFTVSDLKPDTQYYFDVFAVNAATNMSTAYVGTFARTKEEAKQKTVELKDGKVTDVFIKRKGTKFLRFSPVSSHQKVTFSVHSCLDAIQIQVRRDGKLLLSHSVEGVRQFQLRGKPKAKYLIRLKGSKKGASMLKILATSKFNKQPFPSLPEDTRIKAFDKLRTCSSVTVAWLGTQERNKFCVYKKEVDDDYTEEHKKREQNQCLGPDTRKKTEKVLCKYFHSQNIHKAVTTETIKGLQPGKSYMLDVYVMGHGGHSVKYQSKIVKTRKFC</sequence>
<protein>
    <recommendedName>
        <fullName>Protein NDNF</fullName>
    </recommendedName>
</protein>
<feature type="signal peptide" evidence="3">
    <location>
        <begin position="1"/>
        <end position="19"/>
    </location>
</feature>
<feature type="chain" id="PRO_0000301968" description="Protein NDNF">
    <location>
        <begin position="20"/>
        <end position="570"/>
    </location>
</feature>
<feature type="domain" description="Fibronectin type-III 1">
    <location>
        <begin position="261"/>
        <end position="333"/>
    </location>
</feature>
<feature type="domain" description="Fibronectin type-III 2">
    <location>
        <begin position="447"/>
        <end position="566"/>
    </location>
</feature>
<feature type="glycosylation site" description="N-linked (GlcNAc...) asparagine" evidence="3">
    <location>
        <position position="324"/>
    </location>
</feature>